<dbReference type="PIR" id="A60418">
    <property type="entry name" value="A60418"/>
</dbReference>
<dbReference type="SMR" id="P69146"/>
<dbReference type="GO" id="GO:0005576">
    <property type="term" value="C:extracellular region"/>
    <property type="evidence" value="ECO:0007669"/>
    <property type="project" value="UniProtKB-SubCell"/>
</dbReference>
<dbReference type="GO" id="GO:0007218">
    <property type="term" value="P:neuropeptide signaling pathway"/>
    <property type="evidence" value="ECO:0007669"/>
    <property type="project" value="UniProtKB-KW"/>
</dbReference>
<proteinExistence type="evidence at protein level"/>
<accession>P69146</accession>
<accession>P01162</accession>
<feature type="peptide" id="PRO_0000043650" description="FMRFamide">
    <location>
        <begin position="1"/>
        <end position="4"/>
    </location>
</feature>
<feature type="modified residue" description="Phenylalanine amide" evidence="1">
    <location>
        <position position="4"/>
    </location>
</feature>
<evidence type="ECO:0000269" key="1">
    <source>
    </source>
</evidence>
<evidence type="ECO:0000305" key="2"/>
<keyword id="KW-0027">Amidation</keyword>
<keyword id="KW-0903">Direct protein sequencing</keyword>
<keyword id="KW-0527">Neuropeptide</keyword>
<keyword id="KW-0964">Secreted</keyword>
<sequence>FMRF</sequence>
<organism>
    <name type="scientific">Alitta virens</name>
    <name type="common">Sandworm</name>
    <name type="synonym">Nereis virens</name>
    <dbReference type="NCBI Taxonomy" id="880429"/>
    <lineage>
        <taxon>Eukaryota</taxon>
        <taxon>Metazoa</taxon>
        <taxon>Spiralia</taxon>
        <taxon>Lophotrochozoa</taxon>
        <taxon>Annelida</taxon>
        <taxon>Polychaeta</taxon>
        <taxon>Errantia</taxon>
        <taxon>Phyllodocida</taxon>
        <taxon>Nereididae</taxon>
        <taxon>Alitta</taxon>
    </lineage>
</organism>
<protein>
    <recommendedName>
        <fullName>FMRFamide</fullName>
    </recommendedName>
</protein>
<comment type="function">
    <text>Myoactive; cardioexcitatory substance. Pharmacological activities include augmentation, induction, and regularization of cardiac contraction.</text>
</comment>
<comment type="subcellular location">
    <subcellularLocation>
        <location>Secreted</location>
    </subcellularLocation>
</comment>
<comment type="similarity">
    <text evidence="2">Belongs to the FARP (FMRFamide related peptide) family.</text>
</comment>
<name>FMRF_ALIVI</name>
<reference key="1">
    <citation type="journal article" date="1990" name="Peptides">
        <title>Authentic FMRFamide is present in the polychaete Nereis virens.</title>
        <authorList>
            <person name="Krajniak K.G."/>
            <person name="Price D.A."/>
        </authorList>
    </citation>
    <scope>PROTEIN SEQUENCE</scope>
    <scope>AMIDATION AT PHE-4</scope>
</reference>